<organism>
    <name type="scientific">Arabidopsis thaliana</name>
    <name type="common">Mouse-ear cress</name>
    <dbReference type="NCBI Taxonomy" id="3702"/>
    <lineage>
        <taxon>Eukaryota</taxon>
        <taxon>Viridiplantae</taxon>
        <taxon>Streptophyta</taxon>
        <taxon>Embryophyta</taxon>
        <taxon>Tracheophyta</taxon>
        <taxon>Spermatophyta</taxon>
        <taxon>Magnoliopsida</taxon>
        <taxon>eudicotyledons</taxon>
        <taxon>Gunneridae</taxon>
        <taxon>Pentapetalae</taxon>
        <taxon>rosids</taxon>
        <taxon>malvids</taxon>
        <taxon>Brassicales</taxon>
        <taxon>Brassicaceae</taxon>
        <taxon>Camelineae</taxon>
        <taxon>Arabidopsis</taxon>
    </lineage>
</organism>
<name>Y2104_ARATH</name>
<dbReference type="EC" id="2.1.1.-"/>
<dbReference type="EMBL" id="AC004261">
    <property type="protein sequence ID" value="AAD12007.1"/>
    <property type="status" value="ALT_SEQ"/>
    <property type="molecule type" value="Genomic_DNA"/>
</dbReference>
<dbReference type="EMBL" id="CP002685">
    <property type="protein sequence ID" value="AEC09918.1"/>
    <property type="molecule type" value="Genomic_DNA"/>
</dbReference>
<dbReference type="EMBL" id="AK228973">
    <property type="protein sequence ID" value="BAF00862.1"/>
    <property type="molecule type" value="mRNA"/>
</dbReference>
<dbReference type="PIR" id="T02115">
    <property type="entry name" value="T02115"/>
</dbReference>
<dbReference type="RefSeq" id="NP_181637.2">
    <property type="nucleotide sequence ID" value="NM_129669.4"/>
</dbReference>
<dbReference type="SMR" id="Q0WPT7"/>
<dbReference type="FunCoup" id="Q0WPT7">
    <property type="interactions" value="146"/>
</dbReference>
<dbReference type="IntAct" id="Q0WPT7">
    <property type="interactions" value="1"/>
</dbReference>
<dbReference type="STRING" id="3702.Q0WPT7"/>
<dbReference type="iPTMnet" id="Q0WPT7"/>
<dbReference type="PaxDb" id="3702-AT2G41040.1"/>
<dbReference type="ProteomicsDB" id="242599"/>
<dbReference type="EnsemblPlants" id="AT2G41040.1">
    <property type="protein sequence ID" value="AT2G41040.1"/>
    <property type="gene ID" value="AT2G41040"/>
</dbReference>
<dbReference type="GeneID" id="818703"/>
<dbReference type="Gramene" id="AT2G41040.1">
    <property type="protein sequence ID" value="AT2G41040.1"/>
    <property type="gene ID" value="AT2G41040"/>
</dbReference>
<dbReference type="KEGG" id="ath:AT2G41040"/>
<dbReference type="Araport" id="AT2G41040"/>
<dbReference type="TAIR" id="AT2G41040"/>
<dbReference type="eggNOG" id="ENOG502QPQG">
    <property type="taxonomic scope" value="Eukaryota"/>
</dbReference>
<dbReference type="HOGENOM" id="CLU_047070_0_0_1"/>
<dbReference type="InParanoid" id="Q0WPT7"/>
<dbReference type="OMA" id="QRAFIMF"/>
<dbReference type="OrthoDB" id="10017101at2759"/>
<dbReference type="PhylomeDB" id="Q0WPT7"/>
<dbReference type="PRO" id="PR:Q0WPT7"/>
<dbReference type="Proteomes" id="UP000006548">
    <property type="component" value="Chromosome 2"/>
</dbReference>
<dbReference type="ExpressionAtlas" id="Q0WPT7">
    <property type="expression patterns" value="baseline and differential"/>
</dbReference>
<dbReference type="GO" id="GO:0009507">
    <property type="term" value="C:chloroplast"/>
    <property type="evidence" value="ECO:0007005"/>
    <property type="project" value="TAIR"/>
</dbReference>
<dbReference type="GO" id="GO:0010287">
    <property type="term" value="C:plastoglobule"/>
    <property type="evidence" value="ECO:0007005"/>
    <property type="project" value="TAIR"/>
</dbReference>
<dbReference type="GO" id="GO:0008757">
    <property type="term" value="F:S-adenosylmethionine-dependent methyltransferase activity"/>
    <property type="evidence" value="ECO:0007669"/>
    <property type="project" value="InterPro"/>
</dbReference>
<dbReference type="GO" id="GO:0009058">
    <property type="term" value="P:biosynthetic process"/>
    <property type="evidence" value="ECO:0007669"/>
    <property type="project" value="UniProtKB-ARBA"/>
</dbReference>
<dbReference type="GO" id="GO:0032259">
    <property type="term" value="P:methylation"/>
    <property type="evidence" value="ECO:0007669"/>
    <property type="project" value="UniProtKB-KW"/>
</dbReference>
<dbReference type="CDD" id="cd02440">
    <property type="entry name" value="AdoMet_MTases"/>
    <property type="match status" value="1"/>
</dbReference>
<dbReference type="FunFam" id="3.40.50.150:FF:000144">
    <property type="entry name" value="Putative methyltransferase, chloroplastic"/>
    <property type="match status" value="1"/>
</dbReference>
<dbReference type="Gene3D" id="3.40.50.150">
    <property type="entry name" value="Vaccinia Virus protein VP39"/>
    <property type="match status" value="1"/>
</dbReference>
<dbReference type="InterPro" id="IPR013216">
    <property type="entry name" value="Methyltransf_11"/>
</dbReference>
<dbReference type="InterPro" id="IPR029063">
    <property type="entry name" value="SAM-dependent_MTases_sf"/>
</dbReference>
<dbReference type="PANTHER" id="PTHR43591">
    <property type="entry name" value="METHYLTRANSFERASE"/>
    <property type="match status" value="1"/>
</dbReference>
<dbReference type="PANTHER" id="PTHR43591:SF99">
    <property type="entry name" value="OS06G0646000 PROTEIN"/>
    <property type="match status" value="1"/>
</dbReference>
<dbReference type="Pfam" id="PF08241">
    <property type="entry name" value="Methyltransf_11"/>
    <property type="match status" value="1"/>
</dbReference>
<dbReference type="SUPFAM" id="SSF53335">
    <property type="entry name" value="S-adenosyl-L-methionine-dependent methyltransferases"/>
    <property type="match status" value="1"/>
</dbReference>
<keyword id="KW-0150">Chloroplast</keyword>
<keyword id="KW-0489">Methyltransferase</keyword>
<keyword id="KW-0934">Plastid</keyword>
<keyword id="KW-1185">Reference proteome</keyword>
<keyword id="KW-0808">Transferase</keyword>
<keyword id="KW-0809">Transit peptide</keyword>
<gene>
    <name type="ordered locus">At2g41040</name>
    <name type="ORF">T3K9.19</name>
</gene>
<reference key="1">
    <citation type="journal article" date="1999" name="Nature">
        <title>Sequence and analysis of chromosome 2 of the plant Arabidopsis thaliana.</title>
        <authorList>
            <person name="Lin X."/>
            <person name="Kaul S."/>
            <person name="Rounsley S.D."/>
            <person name="Shea T.P."/>
            <person name="Benito M.-I."/>
            <person name="Town C.D."/>
            <person name="Fujii C.Y."/>
            <person name="Mason T.M."/>
            <person name="Bowman C.L."/>
            <person name="Barnstead M.E."/>
            <person name="Feldblyum T.V."/>
            <person name="Buell C.R."/>
            <person name="Ketchum K.A."/>
            <person name="Lee J.J."/>
            <person name="Ronning C.M."/>
            <person name="Koo H.L."/>
            <person name="Moffat K.S."/>
            <person name="Cronin L.A."/>
            <person name="Shen M."/>
            <person name="Pai G."/>
            <person name="Van Aken S."/>
            <person name="Umayam L."/>
            <person name="Tallon L.J."/>
            <person name="Gill J.E."/>
            <person name="Adams M.D."/>
            <person name="Carrera A.J."/>
            <person name="Creasy T.H."/>
            <person name="Goodman H.M."/>
            <person name="Somerville C.R."/>
            <person name="Copenhaver G.P."/>
            <person name="Preuss D."/>
            <person name="Nierman W.C."/>
            <person name="White O."/>
            <person name="Eisen J.A."/>
            <person name="Salzberg S.L."/>
            <person name="Fraser C.M."/>
            <person name="Venter J.C."/>
        </authorList>
    </citation>
    <scope>NUCLEOTIDE SEQUENCE [LARGE SCALE GENOMIC DNA]</scope>
    <source>
        <strain>cv. Columbia</strain>
    </source>
</reference>
<reference key="2">
    <citation type="journal article" date="2017" name="Plant J.">
        <title>Araport11: a complete reannotation of the Arabidopsis thaliana reference genome.</title>
        <authorList>
            <person name="Cheng C.Y."/>
            <person name="Krishnakumar V."/>
            <person name="Chan A.P."/>
            <person name="Thibaud-Nissen F."/>
            <person name="Schobel S."/>
            <person name="Town C.D."/>
        </authorList>
    </citation>
    <scope>GENOME REANNOTATION</scope>
    <source>
        <strain>cv. Columbia</strain>
    </source>
</reference>
<reference key="3">
    <citation type="submission" date="2006-07" db="EMBL/GenBank/DDBJ databases">
        <title>Large-scale analysis of RIKEN Arabidopsis full-length (RAFL) cDNAs.</title>
        <authorList>
            <person name="Totoki Y."/>
            <person name="Seki M."/>
            <person name="Ishida J."/>
            <person name="Nakajima M."/>
            <person name="Enju A."/>
            <person name="Kamiya A."/>
            <person name="Narusaka M."/>
            <person name="Shin-i T."/>
            <person name="Nakagawa M."/>
            <person name="Sakamoto N."/>
            <person name="Oishi K."/>
            <person name="Kohara Y."/>
            <person name="Kobayashi M."/>
            <person name="Toyoda A."/>
            <person name="Sakaki Y."/>
            <person name="Sakurai T."/>
            <person name="Iida K."/>
            <person name="Akiyama K."/>
            <person name="Satou M."/>
            <person name="Toyoda T."/>
            <person name="Konagaya A."/>
            <person name="Carninci P."/>
            <person name="Kawai J."/>
            <person name="Hayashizaki Y."/>
            <person name="Shinozaki K."/>
        </authorList>
    </citation>
    <scope>NUCLEOTIDE SEQUENCE [LARGE SCALE MRNA]</scope>
    <source>
        <strain>cv. Columbia</strain>
    </source>
</reference>
<reference key="4">
    <citation type="journal article" date="2006" name="Plant Physiol.">
        <title>Protein profiling of plastoglobules in chloroplasts and chromoplasts. A surprising site for differential accumulation of metabolic enzymes.</title>
        <authorList>
            <person name="Ytterberg A.J."/>
            <person name="Peltier J.-B."/>
            <person name="van Wijk K.J."/>
        </authorList>
    </citation>
    <scope>IDENTIFICATION BY MASS SPECTROMETRY</scope>
    <scope>SUBCELLULAR LOCATION [LARGE SCALE ANALYSIS]</scope>
    <source>
        <strain>cv. Columbia</strain>
    </source>
</reference>
<reference key="5">
    <citation type="journal article" date="2012" name="Plant Physiol.">
        <title>The functional network of the Arabidopsis plastoglobule proteome based on quantitative proteomics and genome-wide coexpression analysis.</title>
        <authorList>
            <person name="Lundquist P.K."/>
            <person name="Poliakov A."/>
            <person name="Bhuiyan N.H."/>
            <person name="Zybailov B."/>
            <person name="Sun Q."/>
            <person name="van Wijk K.J."/>
        </authorList>
    </citation>
    <scope>IDENTIFICATION BY MASS SPECTROMETRY</scope>
    <scope>SUBCELLULAR LOCATION [LARGE SCALE ANALYSIS]</scope>
    <source>
        <strain>cv. Columbia</strain>
    </source>
</reference>
<comment type="subcellular location">
    <subcellularLocation>
        <location evidence="2 3">Plastid</location>
        <location evidence="2 3">Chloroplast</location>
        <location evidence="2 3">Plastoglobule</location>
    </subcellularLocation>
</comment>
<comment type="similarity">
    <text evidence="4">Belongs to the methyltransferase superfamily.</text>
</comment>
<comment type="sequence caution" evidence="4">
    <conflict type="erroneous gene model prediction">
        <sequence resource="EMBL-CDS" id="AAD12007"/>
    </conflict>
</comment>
<sequence length="352" mass="39230">MAMAALTSSSSAITLLNKPFLPNRSSFFSSDSQSPLLRFSASTSVRSRFPSAAISAVAPKSDINKNETPKIEIEETQVFACPVCYEPLMRKGPSGINLQAIYRSGFKCGQCNKTYSSKDEYLDLTVTADLDDYNEVKPITTELFRSPLVSFLYERGWRQAFKRSGFPGPDEEFRMAEEYFKEAEGGLLVDVSCGSGLFSRKFAQSGKYSGVIALDYSENMLRQCKEFIKNDNTFDNSTNIAVVRADVSRLPFPSGSVDAVHAGAALHCWPSPTNAIAEICRVLRSGGVFVGTTFLRYSPSTPWIIRPFQSRILQSYNYLMQDEIKDVCTSCGLTDYEDYIQDSFIMFTARKP</sequence>
<proteinExistence type="evidence at protein level"/>
<protein>
    <recommendedName>
        <fullName>Uncharacterized methyltransferase At2g41040, chloroplastic</fullName>
        <ecNumber>2.1.1.-</ecNumber>
    </recommendedName>
</protein>
<feature type="transit peptide" description="Chloroplast" evidence="1">
    <location>
        <begin position="1"/>
        <end position="55"/>
    </location>
</feature>
<feature type="chain" id="PRO_0000286520" description="Uncharacterized methyltransferase At2g41040, chloroplastic">
    <location>
        <begin position="56"/>
        <end position="352"/>
    </location>
</feature>
<accession>Q0WPT7</accession>
<accession>O80680</accession>
<evidence type="ECO:0000255" key="1"/>
<evidence type="ECO:0000269" key="2">
    <source>
    </source>
</evidence>
<evidence type="ECO:0000269" key="3">
    <source>
    </source>
</evidence>
<evidence type="ECO:0000305" key="4"/>